<dbReference type="EC" id="6.2.1.5" evidence="1"/>
<dbReference type="EMBL" id="CP000001">
    <property type="protein sequence ID" value="AAU16671.1"/>
    <property type="molecule type" value="Genomic_DNA"/>
</dbReference>
<dbReference type="RefSeq" id="WP_001020785.1">
    <property type="nucleotide sequence ID" value="NZ_CP009968.1"/>
</dbReference>
<dbReference type="SMR" id="Q636J0"/>
<dbReference type="GeneID" id="93007276"/>
<dbReference type="KEGG" id="bcz:BCE33L3595"/>
<dbReference type="PATRIC" id="fig|288681.22.peg.1816"/>
<dbReference type="UniPathway" id="UPA00223">
    <property type="reaction ID" value="UER00999"/>
</dbReference>
<dbReference type="Proteomes" id="UP000002612">
    <property type="component" value="Chromosome"/>
</dbReference>
<dbReference type="GO" id="GO:0005829">
    <property type="term" value="C:cytosol"/>
    <property type="evidence" value="ECO:0007669"/>
    <property type="project" value="TreeGrafter"/>
</dbReference>
<dbReference type="GO" id="GO:0042709">
    <property type="term" value="C:succinate-CoA ligase complex"/>
    <property type="evidence" value="ECO:0007669"/>
    <property type="project" value="TreeGrafter"/>
</dbReference>
<dbReference type="GO" id="GO:0005524">
    <property type="term" value="F:ATP binding"/>
    <property type="evidence" value="ECO:0007669"/>
    <property type="project" value="UniProtKB-UniRule"/>
</dbReference>
<dbReference type="GO" id="GO:0000287">
    <property type="term" value="F:magnesium ion binding"/>
    <property type="evidence" value="ECO:0007669"/>
    <property type="project" value="UniProtKB-UniRule"/>
</dbReference>
<dbReference type="GO" id="GO:0004775">
    <property type="term" value="F:succinate-CoA ligase (ADP-forming) activity"/>
    <property type="evidence" value="ECO:0007669"/>
    <property type="project" value="UniProtKB-UniRule"/>
</dbReference>
<dbReference type="GO" id="GO:0004776">
    <property type="term" value="F:succinate-CoA ligase (GDP-forming) activity"/>
    <property type="evidence" value="ECO:0007669"/>
    <property type="project" value="RHEA"/>
</dbReference>
<dbReference type="GO" id="GO:0006104">
    <property type="term" value="P:succinyl-CoA metabolic process"/>
    <property type="evidence" value="ECO:0007669"/>
    <property type="project" value="TreeGrafter"/>
</dbReference>
<dbReference type="GO" id="GO:0006099">
    <property type="term" value="P:tricarboxylic acid cycle"/>
    <property type="evidence" value="ECO:0007669"/>
    <property type="project" value="UniProtKB-UniRule"/>
</dbReference>
<dbReference type="FunFam" id="3.30.1490.20:FF:000002">
    <property type="entry name" value="Succinate--CoA ligase [ADP-forming] subunit beta"/>
    <property type="match status" value="1"/>
</dbReference>
<dbReference type="FunFam" id="3.30.470.20:FF:000002">
    <property type="entry name" value="Succinate--CoA ligase [ADP-forming] subunit beta"/>
    <property type="match status" value="1"/>
</dbReference>
<dbReference type="FunFam" id="3.40.50.261:FF:000001">
    <property type="entry name" value="Succinate--CoA ligase [ADP-forming] subunit beta"/>
    <property type="match status" value="1"/>
</dbReference>
<dbReference type="Gene3D" id="3.30.1490.20">
    <property type="entry name" value="ATP-grasp fold, A domain"/>
    <property type="match status" value="1"/>
</dbReference>
<dbReference type="Gene3D" id="3.30.470.20">
    <property type="entry name" value="ATP-grasp fold, B domain"/>
    <property type="match status" value="1"/>
</dbReference>
<dbReference type="Gene3D" id="3.40.50.261">
    <property type="entry name" value="Succinyl-CoA synthetase domains"/>
    <property type="match status" value="1"/>
</dbReference>
<dbReference type="HAMAP" id="MF_00558">
    <property type="entry name" value="Succ_CoA_beta"/>
    <property type="match status" value="1"/>
</dbReference>
<dbReference type="InterPro" id="IPR011761">
    <property type="entry name" value="ATP-grasp"/>
</dbReference>
<dbReference type="InterPro" id="IPR013650">
    <property type="entry name" value="ATP-grasp_succ-CoA_synth-type"/>
</dbReference>
<dbReference type="InterPro" id="IPR013815">
    <property type="entry name" value="ATP_grasp_subdomain_1"/>
</dbReference>
<dbReference type="InterPro" id="IPR005811">
    <property type="entry name" value="SUCC_ACL_C"/>
</dbReference>
<dbReference type="InterPro" id="IPR005809">
    <property type="entry name" value="Succ_CoA_ligase-like_bsu"/>
</dbReference>
<dbReference type="InterPro" id="IPR016102">
    <property type="entry name" value="Succinyl-CoA_synth-like"/>
</dbReference>
<dbReference type="NCBIfam" id="NF001913">
    <property type="entry name" value="PRK00696.1"/>
    <property type="match status" value="1"/>
</dbReference>
<dbReference type="NCBIfam" id="TIGR01016">
    <property type="entry name" value="sucCoAbeta"/>
    <property type="match status" value="1"/>
</dbReference>
<dbReference type="PANTHER" id="PTHR11815:SF10">
    <property type="entry name" value="SUCCINATE--COA LIGASE [GDP-FORMING] SUBUNIT BETA, MITOCHONDRIAL"/>
    <property type="match status" value="1"/>
</dbReference>
<dbReference type="PANTHER" id="PTHR11815">
    <property type="entry name" value="SUCCINYL-COA SYNTHETASE BETA CHAIN"/>
    <property type="match status" value="1"/>
</dbReference>
<dbReference type="Pfam" id="PF08442">
    <property type="entry name" value="ATP-grasp_2"/>
    <property type="match status" value="1"/>
</dbReference>
<dbReference type="Pfam" id="PF00549">
    <property type="entry name" value="Ligase_CoA"/>
    <property type="match status" value="1"/>
</dbReference>
<dbReference type="PIRSF" id="PIRSF001554">
    <property type="entry name" value="SucCS_beta"/>
    <property type="match status" value="1"/>
</dbReference>
<dbReference type="SUPFAM" id="SSF56059">
    <property type="entry name" value="Glutathione synthetase ATP-binding domain-like"/>
    <property type="match status" value="1"/>
</dbReference>
<dbReference type="SUPFAM" id="SSF52210">
    <property type="entry name" value="Succinyl-CoA synthetase domains"/>
    <property type="match status" value="1"/>
</dbReference>
<dbReference type="PROSITE" id="PS50975">
    <property type="entry name" value="ATP_GRASP"/>
    <property type="match status" value="1"/>
</dbReference>
<reference key="1">
    <citation type="journal article" date="2006" name="J. Bacteriol.">
        <title>Pathogenomic sequence analysis of Bacillus cereus and Bacillus thuringiensis isolates closely related to Bacillus anthracis.</title>
        <authorList>
            <person name="Han C.S."/>
            <person name="Xie G."/>
            <person name="Challacombe J.F."/>
            <person name="Altherr M.R."/>
            <person name="Bhotika S.S."/>
            <person name="Bruce D."/>
            <person name="Campbell C.S."/>
            <person name="Campbell M.L."/>
            <person name="Chen J."/>
            <person name="Chertkov O."/>
            <person name="Cleland C."/>
            <person name="Dimitrijevic M."/>
            <person name="Doggett N.A."/>
            <person name="Fawcett J.J."/>
            <person name="Glavina T."/>
            <person name="Goodwin L.A."/>
            <person name="Hill K.K."/>
            <person name="Hitchcock P."/>
            <person name="Jackson P.J."/>
            <person name="Keim P."/>
            <person name="Kewalramani A.R."/>
            <person name="Longmire J."/>
            <person name="Lucas S."/>
            <person name="Malfatti S."/>
            <person name="McMurry K."/>
            <person name="Meincke L.J."/>
            <person name="Misra M."/>
            <person name="Moseman B.L."/>
            <person name="Mundt M."/>
            <person name="Munk A.C."/>
            <person name="Okinaka R.T."/>
            <person name="Parson-Quintana B."/>
            <person name="Reilly L.P."/>
            <person name="Richardson P."/>
            <person name="Robinson D.L."/>
            <person name="Rubin E."/>
            <person name="Saunders E."/>
            <person name="Tapia R."/>
            <person name="Tesmer J.G."/>
            <person name="Thayer N."/>
            <person name="Thompson L.S."/>
            <person name="Tice H."/>
            <person name="Ticknor L.O."/>
            <person name="Wills P.L."/>
            <person name="Brettin T.S."/>
            <person name="Gilna P."/>
        </authorList>
    </citation>
    <scope>NUCLEOTIDE SEQUENCE [LARGE SCALE GENOMIC DNA]</scope>
    <source>
        <strain>ZK / E33L</strain>
    </source>
</reference>
<gene>
    <name evidence="1" type="primary">sucC</name>
    <name type="ordered locus">BCE33L3595</name>
</gene>
<name>SUCC_BACCZ</name>
<organism>
    <name type="scientific">Bacillus cereus (strain ZK / E33L)</name>
    <dbReference type="NCBI Taxonomy" id="288681"/>
    <lineage>
        <taxon>Bacteria</taxon>
        <taxon>Bacillati</taxon>
        <taxon>Bacillota</taxon>
        <taxon>Bacilli</taxon>
        <taxon>Bacillales</taxon>
        <taxon>Bacillaceae</taxon>
        <taxon>Bacillus</taxon>
        <taxon>Bacillus cereus group</taxon>
    </lineage>
</organism>
<evidence type="ECO:0000255" key="1">
    <source>
        <dbReference type="HAMAP-Rule" id="MF_00558"/>
    </source>
</evidence>
<comment type="function">
    <text evidence="1">Succinyl-CoA synthetase functions in the citric acid cycle (TCA), coupling the hydrolysis of succinyl-CoA to the synthesis of either ATP or GTP and thus represents the only step of substrate-level phosphorylation in the TCA. The beta subunit provides nucleotide specificity of the enzyme and binds the substrate succinate, while the binding sites for coenzyme A and phosphate are found in the alpha subunit.</text>
</comment>
<comment type="catalytic activity">
    <reaction evidence="1">
        <text>succinate + ATP + CoA = succinyl-CoA + ADP + phosphate</text>
        <dbReference type="Rhea" id="RHEA:17661"/>
        <dbReference type="ChEBI" id="CHEBI:30031"/>
        <dbReference type="ChEBI" id="CHEBI:30616"/>
        <dbReference type="ChEBI" id="CHEBI:43474"/>
        <dbReference type="ChEBI" id="CHEBI:57287"/>
        <dbReference type="ChEBI" id="CHEBI:57292"/>
        <dbReference type="ChEBI" id="CHEBI:456216"/>
        <dbReference type="EC" id="6.2.1.5"/>
    </reaction>
    <physiologicalReaction direction="right-to-left" evidence="1">
        <dbReference type="Rhea" id="RHEA:17663"/>
    </physiologicalReaction>
</comment>
<comment type="catalytic activity">
    <reaction evidence="1">
        <text>GTP + succinate + CoA = succinyl-CoA + GDP + phosphate</text>
        <dbReference type="Rhea" id="RHEA:22120"/>
        <dbReference type="ChEBI" id="CHEBI:30031"/>
        <dbReference type="ChEBI" id="CHEBI:37565"/>
        <dbReference type="ChEBI" id="CHEBI:43474"/>
        <dbReference type="ChEBI" id="CHEBI:57287"/>
        <dbReference type="ChEBI" id="CHEBI:57292"/>
        <dbReference type="ChEBI" id="CHEBI:58189"/>
    </reaction>
    <physiologicalReaction direction="right-to-left" evidence="1">
        <dbReference type="Rhea" id="RHEA:22122"/>
    </physiologicalReaction>
</comment>
<comment type="cofactor">
    <cofactor evidence="1">
        <name>Mg(2+)</name>
        <dbReference type="ChEBI" id="CHEBI:18420"/>
    </cofactor>
    <text evidence="1">Binds 1 Mg(2+) ion per subunit.</text>
</comment>
<comment type="pathway">
    <text evidence="1">Carbohydrate metabolism; tricarboxylic acid cycle; succinate from succinyl-CoA (ligase route): step 1/1.</text>
</comment>
<comment type="subunit">
    <text evidence="1">Heterotetramer of two alpha and two beta subunits.</text>
</comment>
<comment type="similarity">
    <text evidence="1">Belongs to the succinate/malate CoA ligase beta subunit family.</text>
</comment>
<keyword id="KW-0067">ATP-binding</keyword>
<keyword id="KW-0436">Ligase</keyword>
<keyword id="KW-0460">Magnesium</keyword>
<keyword id="KW-0479">Metal-binding</keyword>
<keyword id="KW-0547">Nucleotide-binding</keyword>
<keyword id="KW-0816">Tricarboxylic acid cycle</keyword>
<feature type="chain" id="PRO_1000082010" description="Succinate--CoA ligase [ADP-forming] subunit beta">
    <location>
        <begin position="1"/>
        <end position="386"/>
    </location>
</feature>
<feature type="domain" description="ATP-grasp" evidence="1">
    <location>
        <begin position="9"/>
        <end position="244"/>
    </location>
</feature>
<feature type="binding site" evidence="1">
    <location>
        <position position="46"/>
    </location>
    <ligand>
        <name>ATP</name>
        <dbReference type="ChEBI" id="CHEBI:30616"/>
    </ligand>
</feature>
<feature type="binding site" evidence="1">
    <location>
        <begin position="53"/>
        <end position="55"/>
    </location>
    <ligand>
        <name>ATP</name>
        <dbReference type="ChEBI" id="CHEBI:30616"/>
    </ligand>
</feature>
<feature type="binding site" evidence="1">
    <location>
        <position position="99"/>
    </location>
    <ligand>
        <name>ATP</name>
        <dbReference type="ChEBI" id="CHEBI:30616"/>
    </ligand>
</feature>
<feature type="binding site" evidence="1">
    <location>
        <position position="102"/>
    </location>
    <ligand>
        <name>ATP</name>
        <dbReference type="ChEBI" id="CHEBI:30616"/>
    </ligand>
</feature>
<feature type="binding site" evidence="1">
    <location>
        <position position="107"/>
    </location>
    <ligand>
        <name>ATP</name>
        <dbReference type="ChEBI" id="CHEBI:30616"/>
    </ligand>
</feature>
<feature type="binding site" evidence="1">
    <location>
        <position position="199"/>
    </location>
    <ligand>
        <name>Mg(2+)</name>
        <dbReference type="ChEBI" id="CHEBI:18420"/>
    </ligand>
</feature>
<feature type="binding site" evidence="1">
    <location>
        <position position="213"/>
    </location>
    <ligand>
        <name>Mg(2+)</name>
        <dbReference type="ChEBI" id="CHEBI:18420"/>
    </ligand>
</feature>
<feature type="binding site" evidence="1">
    <location>
        <position position="264"/>
    </location>
    <ligand>
        <name>substrate</name>
        <note>ligand shared with subunit alpha</note>
    </ligand>
</feature>
<feature type="binding site" evidence="1">
    <location>
        <begin position="321"/>
        <end position="323"/>
    </location>
    <ligand>
        <name>substrate</name>
        <note>ligand shared with subunit alpha</note>
    </ligand>
</feature>
<sequence>MNIHEYQGKAVLRSYGVSVPNGKVAFTVEEAVEAAKELGTDVCVVKAQIHAGGRGKAGGVKVAKNLDEVRTYAESILGTTLVTHQTGPEGKEVKRLLIEEGCDIKKEYYVGLVLDRATSQVVLMASEEGGTEIEEVAEKTPEKIFKEYIDPAVGLQGFQARRIAFNINIPKELVGQAVKFMMGLYRAFIEKDCSIAEINPLVTTGDGKVMALDAKLNFDSNALYRHKDILELRDLDEEDAKEIEASKYDLNYIPLDGNIGCMVNGAGLAMATMDIIKHYHGDPANFLDVGGGATAEKVTEAFKIILSDKNVKGIFVNIFGGIMKCDVIAEGVIEATKQVGLELPLVVRLEGTNVELGKKILNESGLNIVAAESMADGAQKIVSLVG</sequence>
<protein>
    <recommendedName>
        <fullName evidence="1">Succinate--CoA ligase [ADP-forming] subunit beta</fullName>
        <ecNumber evidence="1">6.2.1.5</ecNumber>
    </recommendedName>
    <alternativeName>
        <fullName evidence="1">Succinyl-CoA synthetase subunit beta</fullName>
        <shortName evidence="1">SCS-beta</shortName>
    </alternativeName>
</protein>
<accession>Q636J0</accession>
<proteinExistence type="inferred from homology"/>